<proteinExistence type="inferred from homology"/>
<name>END4_THENE</name>
<protein>
    <recommendedName>
        <fullName>Probable endonuclease 4</fullName>
        <ecNumber>3.1.21.2</ecNumber>
    </recommendedName>
    <alternativeName>
        <fullName>Endodeoxyribonuclease IV</fullName>
    </alternativeName>
    <alternativeName>
        <fullName>Endonuclease IV</fullName>
    </alternativeName>
</protein>
<feature type="chain" id="PRO_0000190881" description="Probable endonuclease 4">
    <location>
        <begin position="1" status="less than"/>
        <end position="108"/>
    </location>
</feature>
<feature type="binding site" evidence="1">
    <location>
        <position position="2"/>
    </location>
    <ligand>
        <name>Zn(2+)</name>
        <dbReference type="ChEBI" id="CHEBI:29105"/>
        <label>3</label>
    </ligand>
</feature>
<feature type="binding site" evidence="1">
    <location>
        <position position="36"/>
    </location>
    <ligand>
        <name>Zn(2+)</name>
        <dbReference type="ChEBI" id="CHEBI:29105"/>
        <label>2</label>
    </ligand>
</feature>
<feature type="binding site" evidence="1">
    <location>
        <position position="49"/>
    </location>
    <ligand>
        <name>Zn(2+)</name>
        <dbReference type="ChEBI" id="CHEBI:29105"/>
        <label>3</label>
    </ligand>
</feature>
<feature type="binding site" evidence="1">
    <location>
        <position position="51"/>
    </location>
    <ligand>
        <name>Zn(2+)</name>
        <dbReference type="ChEBI" id="CHEBI:29105"/>
        <label>3</label>
    </ligand>
</feature>
<feature type="binding site" evidence="1">
    <location>
        <position position="81"/>
    </location>
    <ligand>
        <name>Zn(2+)</name>
        <dbReference type="ChEBI" id="CHEBI:29105"/>
        <label>2</label>
    </ligand>
</feature>
<feature type="non-terminal residue">
    <location>
        <position position="1"/>
    </location>
</feature>
<sequence length="108" mass="12331">CHGFDSGYDITKKEGVESLLSEIENLFGLERLKMIHLNDSKYPLGAAKDRHERIGSGFIGEAGFAVFFSFKEVQRIPWILETPGGNEEHAEDIKKVFEIIEKYRIEVD</sequence>
<keyword id="KW-0227">DNA damage</keyword>
<keyword id="KW-0234">DNA repair</keyword>
<keyword id="KW-0255">Endonuclease</keyword>
<keyword id="KW-0378">Hydrolase</keyword>
<keyword id="KW-0479">Metal-binding</keyword>
<keyword id="KW-0540">Nuclease</keyword>
<keyword id="KW-0862">Zinc</keyword>
<reference key="1">
    <citation type="submission" date="1998-07" db="EMBL/GenBank/DDBJ databases">
        <authorList>
            <person name="Zverlov V.V."/>
            <person name="Mashchenko O.V."/>
            <person name="Liebl W."/>
            <person name="Velikodvorskaya G.A."/>
        </authorList>
    </citation>
    <scope>NUCLEOTIDE SEQUENCE [GENOMIC DNA]</scope>
    <source>
        <strain>Z2706-MC24</strain>
    </source>
</reference>
<evidence type="ECO:0000255" key="1">
    <source>
        <dbReference type="PROSITE-ProRule" id="PRU00763"/>
    </source>
</evidence>
<accession>O86954</accession>
<organism>
    <name type="scientific">Thermotoga neapolitana</name>
    <dbReference type="NCBI Taxonomy" id="2337"/>
    <lineage>
        <taxon>Bacteria</taxon>
        <taxon>Thermotogati</taxon>
        <taxon>Thermotogota</taxon>
        <taxon>Thermotogae</taxon>
        <taxon>Thermotogales</taxon>
        <taxon>Thermotogaceae</taxon>
        <taxon>Thermotoga</taxon>
    </lineage>
</organism>
<gene>
    <name type="primary">nfo</name>
</gene>
<dbReference type="EC" id="3.1.21.2"/>
<dbReference type="EMBL" id="AJ009831">
    <property type="protein sequence ID" value="CAA08862.1"/>
    <property type="molecule type" value="Genomic_DNA"/>
</dbReference>
<dbReference type="SMR" id="O86954"/>
<dbReference type="GO" id="GO:0008833">
    <property type="term" value="F:deoxyribonuclease IV (phage-T4-induced) activity"/>
    <property type="evidence" value="ECO:0007669"/>
    <property type="project" value="UniProtKB-EC"/>
</dbReference>
<dbReference type="GO" id="GO:0003677">
    <property type="term" value="F:DNA binding"/>
    <property type="evidence" value="ECO:0007669"/>
    <property type="project" value="InterPro"/>
</dbReference>
<dbReference type="GO" id="GO:0003906">
    <property type="term" value="F:DNA-(apurinic or apyrimidinic site) endonuclease activity"/>
    <property type="evidence" value="ECO:0007669"/>
    <property type="project" value="TreeGrafter"/>
</dbReference>
<dbReference type="GO" id="GO:0008081">
    <property type="term" value="F:phosphoric diester hydrolase activity"/>
    <property type="evidence" value="ECO:0007669"/>
    <property type="project" value="TreeGrafter"/>
</dbReference>
<dbReference type="GO" id="GO:0008270">
    <property type="term" value="F:zinc ion binding"/>
    <property type="evidence" value="ECO:0007669"/>
    <property type="project" value="InterPro"/>
</dbReference>
<dbReference type="GO" id="GO:0006284">
    <property type="term" value="P:base-excision repair"/>
    <property type="evidence" value="ECO:0007669"/>
    <property type="project" value="TreeGrafter"/>
</dbReference>
<dbReference type="Gene3D" id="3.20.20.150">
    <property type="entry name" value="Divalent-metal-dependent TIM barrel enzymes"/>
    <property type="match status" value="1"/>
</dbReference>
<dbReference type="InterPro" id="IPR001719">
    <property type="entry name" value="AP_endonuc_2"/>
</dbReference>
<dbReference type="InterPro" id="IPR018246">
    <property type="entry name" value="AP_endonuc_F2_Zn_BS"/>
</dbReference>
<dbReference type="InterPro" id="IPR036237">
    <property type="entry name" value="Xyl_isomerase-like_sf"/>
</dbReference>
<dbReference type="InterPro" id="IPR013022">
    <property type="entry name" value="Xyl_isomerase-like_TIM-brl"/>
</dbReference>
<dbReference type="PANTHER" id="PTHR21445:SF0">
    <property type="entry name" value="APURINIC-APYRIMIDINIC ENDONUCLEASE"/>
    <property type="match status" value="1"/>
</dbReference>
<dbReference type="PANTHER" id="PTHR21445">
    <property type="entry name" value="ENDONUCLEASE IV ENDODEOXYRIBONUCLEASE IV"/>
    <property type="match status" value="1"/>
</dbReference>
<dbReference type="Pfam" id="PF01261">
    <property type="entry name" value="AP_endonuc_2"/>
    <property type="match status" value="1"/>
</dbReference>
<dbReference type="SUPFAM" id="SSF51658">
    <property type="entry name" value="Xylose isomerase-like"/>
    <property type="match status" value="1"/>
</dbReference>
<dbReference type="PROSITE" id="PS00731">
    <property type="entry name" value="AP_NUCLEASE_F2_3"/>
    <property type="match status" value="1"/>
</dbReference>
<dbReference type="PROSITE" id="PS51432">
    <property type="entry name" value="AP_NUCLEASE_F2_4"/>
    <property type="match status" value="1"/>
</dbReference>
<comment type="function">
    <text>Endonuclease IV plays a role in DNA repair. It cleaves phosphodiester bonds at apurinic or apyrimidinic (AP) sites, generating a 3'-hydroxyl group and a 5'-terminal sugar phosphate.</text>
</comment>
<comment type="catalytic activity">
    <reaction evidence="1">
        <text>Endonucleolytic cleavage to 5'-phosphooligonucleotide end-products.</text>
        <dbReference type="EC" id="3.1.21.2"/>
    </reaction>
</comment>
<comment type="cofactor">
    <cofactor evidence="1">
        <name>Zn(2+)</name>
        <dbReference type="ChEBI" id="CHEBI:29105"/>
    </cofactor>
    <text evidence="1">Binds 3 Zn(2+) ions.</text>
</comment>
<comment type="similarity">
    <text evidence="1">Belongs to the AP endonuclease 2 family.</text>
</comment>